<comment type="function">
    <text evidence="1">An accessory protein needed during the final step in the assembly of 30S ribosomal subunit, possibly for assembly of the head region. Essential for efficient processing of 16S rRNA. May be needed both before and after RbfA during the maturation of 16S rRNA. It has affinity for free ribosomal 30S subunits but not for 70S ribosomes.</text>
</comment>
<comment type="subunit">
    <text evidence="1">Binds ribosomal protein uS19.</text>
</comment>
<comment type="subcellular location">
    <subcellularLocation>
        <location evidence="1">Cytoplasm</location>
    </subcellularLocation>
</comment>
<comment type="domain">
    <text evidence="1">The PRC barrel domain binds ribosomal protein uS19.</text>
</comment>
<comment type="similarity">
    <text evidence="1">Belongs to the RimM family.</text>
</comment>
<proteinExistence type="inferred from homology"/>
<evidence type="ECO:0000255" key="1">
    <source>
        <dbReference type="HAMAP-Rule" id="MF_00014"/>
    </source>
</evidence>
<reference key="1">
    <citation type="submission" date="2005-10" db="EMBL/GenBank/DDBJ databases">
        <title>Complete sequence of Pelobacter carbinolicus DSM 2380.</title>
        <authorList>
            <person name="Copeland A."/>
            <person name="Lucas S."/>
            <person name="Lapidus A."/>
            <person name="Barry K."/>
            <person name="Detter J.C."/>
            <person name="Glavina T."/>
            <person name="Hammon N."/>
            <person name="Israni S."/>
            <person name="Pitluck S."/>
            <person name="Chertkov O."/>
            <person name="Schmutz J."/>
            <person name="Larimer F."/>
            <person name="Land M."/>
            <person name="Kyrpides N."/>
            <person name="Ivanova N."/>
            <person name="Richardson P."/>
        </authorList>
    </citation>
    <scope>NUCLEOTIDE SEQUENCE [LARGE SCALE GENOMIC DNA]</scope>
    <source>
        <strain>DSM 2380 / NBRC 103641 / GraBd1</strain>
    </source>
</reference>
<dbReference type="EMBL" id="CP000142">
    <property type="protein sequence ID" value="ABA89461.1"/>
    <property type="molecule type" value="Genomic_DNA"/>
</dbReference>
<dbReference type="RefSeq" id="WP_011341976.1">
    <property type="nucleotide sequence ID" value="NC_007498.2"/>
</dbReference>
<dbReference type="SMR" id="Q3A2E6"/>
<dbReference type="STRING" id="338963.Pcar_2222"/>
<dbReference type="KEGG" id="pca:Pcar_2222"/>
<dbReference type="eggNOG" id="COG0806">
    <property type="taxonomic scope" value="Bacteria"/>
</dbReference>
<dbReference type="HOGENOM" id="CLU_077636_3_2_7"/>
<dbReference type="OrthoDB" id="9783509at2"/>
<dbReference type="Proteomes" id="UP000002534">
    <property type="component" value="Chromosome"/>
</dbReference>
<dbReference type="GO" id="GO:0005737">
    <property type="term" value="C:cytoplasm"/>
    <property type="evidence" value="ECO:0007669"/>
    <property type="project" value="UniProtKB-SubCell"/>
</dbReference>
<dbReference type="GO" id="GO:0005840">
    <property type="term" value="C:ribosome"/>
    <property type="evidence" value="ECO:0007669"/>
    <property type="project" value="InterPro"/>
</dbReference>
<dbReference type="GO" id="GO:0043022">
    <property type="term" value="F:ribosome binding"/>
    <property type="evidence" value="ECO:0007669"/>
    <property type="project" value="InterPro"/>
</dbReference>
<dbReference type="GO" id="GO:0042274">
    <property type="term" value="P:ribosomal small subunit biogenesis"/>
    <property type="evidence" value="ECO:0007669"/>
    <property type="project" value="UniProtKB-UniRule"/>
</dbReference>
<dbReference type="GO" id="GO:0006364">
    <property type="term" value="P:rRNA processing"/>
    <property type="evidence" value="ECO:0007669"/>
    <property type="project" value="UniProtKB-UniRule"/>
</dbReference>
<dbReference type="Gene3D" id="2.30.30.240">
    <property type="entry name" value="PRC-barrel domain"/>
    <property type="match status" value="1"/>
</dbReference>
<dbReference type="Gene3D" id="2.40.30.60">
    <property type="entry name" value="RimM"/>
    <property type="match status" value="1"/>
</dbReference>
<dbReference type="HAMAP" id="MF_00014">
    <property type="entry name" value="Ribosome_mat_RimM"/>
    <property type="match status" value="1"/>
</dbReference>
<dbReference type="InterPro" id="IPR011033">
    <property type="entry name" value="PRC_barrel-like_sf"/>
</dbReference>
<dbReference type="InterPro" id="IPR056792">
    <property type="entry name" value="PRC_RimM"/>
</dbReference>
<dbReference type="InterPro" id="IPR011961">
    <property type="entry name" value="RimM"/>
</dbReference>
<dbReference type="InterPro" id="IPR002676">
    <property type="entry name" value="RimM_N"/>
</dbReference>
<dbReference type="InterPro" id="IPR036976">
    <property type="entry name" value="RimM_N_sf"/>
</dbReference>
<dbReference type="InterPro" id="IPR009000">
    <property type="entry name" value="Transl_B-barrel_sf"/>
</dbReference>
<dbReference type="NCBIfam" id="TIGR02273">
    <property type="entry name" value="16S_RimM"/>
    <property type="match status" value="1"/>
</dbReference>
<dbReference type="PANTHER" id="PTHR33692">
    <property type="entry name" value="RIBOSOME MATURATION FACTOR RIMM"/>
    <property type="match status" value="1"/>
</dbReference>
<dbReference type="PANTHER" id="PTHR33692:SF1">
    <property type="entry name" value="RIBOSOME MATURATION FACTOR RIMM"/>
    <property type="match status" value="1"/>
</dbReference>
<dbReference type="Pfam" id="PF24986">
    <property type="entry name" value="PRC_RimM"/>
    <property type="match status" value="1"/>
</dbReference>
<dbReference type="Pfam" id="PF01782">
    <property type="entry name" value="RimM"/>
    <property type="match status" value="1"/>
</dbReference>
<dbReference type="SUPFAM" id="SSF50346">
    <property type="entry name" value="PRC-barrel domain"/>
    <property type="match status" value="1"/>
</dbReference>
<dbReference type="SUPFAM" id="SSF50447">
    <property type="entry name" value="Translation proteins"/>
    <property type="match status" value="1"/>
</dbReference>
<name>RIMM_SYNC1</name>
<protein>
    <recommendedName>
        <fullName evidence="1">Ribosome maturation factor RimM</fullName>
    </recommendedName>
</protein>
<feature type="chain" id="PRO_0000244144" description="Ribosome maturation factor RimM">
    <location>
        <begin position="1"/>
        <end position="175"/>
    </location>
</feature>
<feature type="domain" description="PRC barrel" evidence="1">
    <location>
        <begin position="99"/>
        <end position="171"/>
    </location>
</feature>
<organism>
    <name type="scientific">Syntrophotalea carbinolica (strain DSM 2380 / NBRC 103641 / GraBd1)</name>
    <name type="common">Pelobacter carbinolicus</name>
    <dbReference type="NCBI Taxonomy" id="338963"/>
    <lineage>
        <taxon>Bacteria</taxon>
        <taxon>Pseudomonadati</taxon>
        <taxon>Thermodesulfobacteriota</taxon>
        <taxon>Desulfuromonadia</taxon>
        <taxon>Desulfuromonadales</taxon>
        <taxon>Syntrophotaleaceae</taxon>
        <taxon>Syntrophotalea</taxon>
    </lineage>
</organism>
<accession>Q3A2E6</accession>
<gene>
    <name evidence="1" type="primary">rimM</name>
    <name type="ordered locus">Pcar_2222</name>
</gene>
<keyword id="KW-0143">Chaperone</keyword>
<keyword id="KW-0963">Cytoplasm</keyword>
<keyword id="KW-1185">Reference proteome</keyword>
<keyword id="KW-0690">Ribosome biogenesis</keyword>
<keyword id="KW-0698">rRNA processing</keyword>
<sequence>MVLQQSDLLILGVVIGTHGLRGDLKIRGSDQDFPLLSKMHQLVFLREGETVLKCARRKAGWYKGHLLLQIAGYRDVRAVQHLVGCEVAVRRDDVPGLPAGEYYWFQLKGMTAVDRRLGALGCLEDIFTTAAHDIYVINGDYGEVLVPAVKAFIADVDLESNRILFDLPDGLVQET</sequence>